<organism>
    <name type="scientific">Salmo salar</name>
    <name type="common">Atlantic salmon</name>
    <dbReference type="NCBI Taxonomy" id="8030"/>
    <lineage>
        <taxon>Eukaryota</taxon>
        <taxon>Metazoa</taxon>
        <taxon>Chordata</taxon>
        <taxon>Craniata</taxon>
        <taxon>Vertebrata</taxon>
        <taxon>Euteleostomi</taxon>
        <taxon>Actinopterygii</taxon>
        <taxon>Neopterygii</taxon>
        <taxon>Teleostei</taxon>
        <taxon>Protacanthopterygii</taxon>
        <taxon>Salmoniformes</taxon>
        <taxon>Salmonidae</taxon>
        <taxon>Salmoninae</taxon>
        <taxon>Salmo</taxon>
    </lineage>
</organism>
<protein>
    <recommendedName>
        <fullName>Proteasome subunit beta type-9</fullName>
        <ecNumber>3.4.25.1</ecNumber>
    </recommendedName>
    <alternativeName>
        <fullName>Low molecular mass protein 2</fullName>
    </alternativeName>
</protein>
<evidence type="ECO:0000250" key="1"/>
<evidence type="ECO:0000250" key="2">
    <source>
        <dbReference type="UniProtKB" id="O35955"/>
    </source>
</evidence>
<evidence type="ECO:0000255" key="3">
    <source>
        <dbReference type="PROSITE-ProRule" id="PRU00809"/>
    </source>
</evidence>
<keyword id="KW-0963">Cytoplasm</keyword>
<keyword id="KW-0378">Hydrolase</keyword>
<keyword id="KW-0391">Immunity</keyword>
<keyword id="KW-0539">Nucleus</keyword>
<keyword id="KW-0645">Protease</keyword>
<keyword id="KW-0647">Proteasome</keyword>
<keyword id="KW-1185">Reference proteome</keyword>
<keyword id="KW-0888">Threonine protease</keyword>
<keyword id="KW-0865">Zymogen</keyword>
<reference key="1">
    <citation type="submission" date="1999-09" db="EMBL/GenBank/DDBJ databases">
        <title>Proteasome genes in Atlantic salmon.</title>
        <authorList>
            <person name="Grimholt U."/>
        </authorList>
    </citation>
    <scope>NUCLEOTIDE SEQUENCE [MRNA]</scope>
</reference>
<reference key="2">
    <citation type="journal article" date="2007" name="BMC Genomics">
        <title>Genomic organization of duplicated major histocompatibility complex class I regions in Atlantic salmon (Salmo salar).</title>
        <authorList>
            <person name="Lukacs M.F."/>
            <person name="Harstad H."/>
            <person name="Grimholt U."/>
            <person name="Beetz-Sargent M."/>
            <person name="Cooper G.A."/>
            <person name="Reid L."/>
            <person name="Bakke H.G."/>
            <person name="Phillips R.B."/>
            <person name="Miller K.M."/>
            <person name="Davidson W.S."/>
            <person name="Koop B.F."/>
        </authorList>
    </citation>
    <scope>NUCLEOTIDE SEQUENCE [GENOMIC DNA]</scope>
</reference>
<comment type="function">
    <text evidence="1">The proteasome is a multicatalytic proteinase complex which is characterized by its ability to cleave peptides with Arg, Phe, Tyr, Leu, and Glu adjacent to the leaving group at neutral or slightly basic pH. The proteasome has an ATP-dependent proteolytic activity. This subunit is involved in antigen processing to generate class I binding peptides (By similarity).</text>
</comment>
<comment type="catalytic activity">
    <reaction>
        <text>Cleavage of peptide bonds with very broad specificity.</text>
        <dbReference type="EC" id="3.4.25.1"/>
    </reaction>
</comment>
<comment type="subunit">
    <text evidence="1">The 26S proteasome consists of a 20S proteasome core and two 19S regulatory subunits. The 20S proteasome core is composed of 28 subunits that are arranged in four stacked rings, resulting in a barrel-shaped structure. The two end rings are each formed by seven alpha subunits, and the two central rings are each formed by seven beta subunits. The catalytic chamber with the active sites is on the inside of the barrel. Component of the immunoproteasome, where it displaces the equivalent housekeeping subunit PSMB6 (By similarity).</text>
</comment>
<comment type="subcellular location">
    <subcellularLocation>
        <location evidence="3">Cytoplasm</location>
    </subcellularLocation>
    <subcellularLocation>
        <location evidence="1">Nucleus</location>
    </subcellularLocation>
</comment>
<comment type="PTM">
    <text evidence="2">Autocleaved. The resulting N-terminal Thr residue of the mature subunit is responsible for the nucleophile proteolytic activity.</text>
</comment>
<comment type="similarity">
    <text evidence="3">Belongs to the peptidase T1B family.</text>
</comment>
<accession>Q9DD33</accession>
<accession>A7KE02</accession>
<feature type="propeptide" id="PRO_0000026637" description="Removed in mature form" evidence="1">
    <location>
        <begin position="1"/>
        <end position="18"/>
    </location>
</feature>
<feature type="chain" id="PRO_0000026638" description="Proteasome subunit beta type-9">
    <location>
        <begin position="19"/>
        <end position="217"/>
    </location>
</feature>
<feature type="active site" description="Nucleophile" evidence="1">
    <location>
        <position position="19"/>
    </location>
</feature>
<feature type="site" description="Cleavage; by autolysis" evidence="2">
    <location>
        <begin position="18"/>
        <end position="19"/>
    </location>
</feature>
<gene>
    <name type="primary">psmb9-a</name>
    <name type="synonym">lmp2-a</name>
</gene>
<gene>
    <name type="primary">psmb9-b</name>
    <name type="synonym">lmp2-b</name>
</gene>
<sequence>MLEESSEPGWLSEEVKTGTTIIAIEFDGGVVLGSDSRVSAGETVVNRVMNKLSLLHDKIYCALSGSAADAQTIAEMVNYQLDVHSIEVGEDPQVRSAATLVKNISYKYKEELSAHLIVAGWDKRGGGQVYVTLNGLLSRQPFAVGGSGSAYVYGFVDAEYRKAMSKEDCQQFVVNTLSLAMSRDGSSGGVAYLVTIDEKGAEEKCILGNELPTFYDQ</sequence>
<proteinExistence type="evidence at transcript level"/>
<dbReference type="EC" id="3.4.25.1"/>
<dbReference type="EMBL" id="AF184932">
    <property type="protein sequence ID" value="AAG43434.1"/>
    <property type="molecule type" value="mRNA"/>
</dbReference>
<dbReference type="EMBL" id="AF184933">
    <property type="protein sequence ID" value="AAG43435.1"/>
    <property type="molecule type" value="mRNA"/>
</dbReference>
<dbReference type="EMBL" id="AF184934">
    <property type="protein sequence ID" value="AAG43436.1"/>
    <property type="molecule type" value="mRNA"/>
</dbReference>
<dbReference type="EMBL" id="AF184935">
    <property type="protein sequence ID" value="AAG43437.1"/>
    <property type="molecule type" value="mRNA"/>
</dbReference>
<dbReference type="EMBL" id="AF184936">
    <property type="protein sequence ID" value="AAG43438.1"/>
    <property type="molecule type" value="mRNA"/>
</dbReference>
<dbReference type="EMBL" id="EF210363">
    <property type="protein sequence ID" value="ABQ01991.1"/>
    <property type="molecule type" value="Genomic_DNA"/>
</dbReference>
<dbReference type="EMBL" id="EF427379">
    <property type="protein sequence ID" value="ABQ59649.1"/>
    <property type="molecule type" value="Genomic_DNA"/>
</dbReference>
<dbReference type="EMBL" id="EF427384">
    <property type="protein sequence ID" value="ABQ59682.1"/>
    <property type="molecule type" value="Genomic_DNA"/>
</dbReference>
<dbReference type="RefSeq" id="NP_001117174.1">
    <property type="nucleotide sequence ID" value="NM_001123702.2"/>
</dbReference>
<dbReference type="RefSeq" id="NP_001117186.1">
    <property type="nucleotide sequence ID" value="NM_001123714.1"/>
</dbReference>
<dbReference type="RefSeq" id="XP_014032547.1">
    <property type="nucleotide sequence ID" value="XM_014177072.2"/>
</dbReference>
<dbReference type="RefSeq" id="XP_014032548.1">
    <property type="nucleotide sequence ID" value="XM_014177073.1"/>
</dbReference>
<dbReference type="RefSeq" id="XP_014032549.1">
    <property type="nucleotide sequence ID" value="XM_014177074.2"/>
</dbReference>
<dbReference type="SMR" id="Q9DD33"/>
<dbReference type="STRING" id="8030.ENSSSAP00000035410"/>
<dbReference type="MEROPS" id="T01.013"/>
<dbReference type="PaxDb" id="8030-ENSSSAP00000035410"/>
<dbReference type="GeneID" id="100136936"/>
<dbReference type="GeneID" id="100137045"/>
<dbReference type="KEGG" id="sasa:100136936"/>
<dbReference type="KEGG" id="sasa:100137045"/>
<dbReference type="CTD" id="100136936"/>
<dbReference type="CTD" id="30665"/>
<dbReference type="OrthoDB" id="438083at7898"/>
<dbReference type="Proteomes" id="UP000087266">
    <property type="component" value="Chromosome ssa14"/>
</dbReference>
<dbReference type="Proteomes" id="UP000087266">
    <property type="component" value="Chromosome ssa27"/>
</dbReference>
<dbReference type="GO" id="GO:0005737">
    <property type="term" value="C:cytoplasm"/>
    <property type="evidence" value="ECO:0007669"/>
    <property type="project" value="UniProtKB-SubCell"/>
</dbReference>
<dbReference type="GO" id="GO:0005634">
    <property type="term" value="C:nucleus"/>
    <property type="evidence" value="ECO:0007669"/>
    <property type="project" value="UniProtKB-SubCell"/>
</dbReference>
<dbReference type="GO" id="GO:0019774">
    <property type="term" value="C:proteasome core complex, beta-subunit complex"/>
    <property type="evidence" value="ECO:0000250"/>
    <property type="project" value="UniProtKB"/>
</dbReference>
<dbReference type="GO" id="GO:0004298">
    <property type="term" value="F:threonine-type endopeptidase activity"/>
    <property type="evidence" value="ECO:0007669"/>
    <property type="project" value="UniProtKB-KW"/>
</dbReference>
<dbReference type="GO" id="GO:0002376">
    <property type="term" value="P:immune system process"/>
    <property type="evidence" value="ECO:0007669"/>
    <property type="project" value="UniProtKB-KW"/>
</dbReference>
<dbReference type="GO" id="GO:0051603">
    <property type="term" value="P:proteolysis involved in protein catabolic process"/>
    <property type="evidence" value="ECO:0007669"/>
    <property type="project" value="InterPro"/>
</dbReference>
<dbReference type="CDD" id="cd03762">
    <property type="entry name" value="proteasome_beta_type_6"/>
    <property type="match status" value="1"/>
</dbReference>
<dbReference type="FunFam" id="3.60.20.10:FF:000010">
    <property type="entry name" value="Proteasome subunit beta type-1"/>
    <property type="match status" value="1"/>
</dbReference>
<dbReference type="Gene3D" id="3.60.20.10">
    <property type="entry name" value="Glutamine Phosphoribosylpyrophosphate, subunit 1, domain 1"/>
    <property type="match status" value="1"/>
</dbReference>
<dbReference type="InterPro" id="IPR029055">
    <property type="entry name" value="Ntn_hydrolases_N"/>
</dbReference>
<dbReference type="InterPro" id="IPR000243">
    <property type="entry name" value="Pept_T1A_subB"/>
</dbReference>
<dbReference type="InterPro" id="IPR016050">
    <property type="entry name" value="Proteasome_bsu_CS"/>
</dbReference>
<dbReference type="InterPro" id="IPR001353">
    <property type="entry name" value="Proteasome_sua/b"/>
</dbReference>
<dbReference type="InterPro" id="IPR023333">
    <property type="entry name" value="Proteasome_suB-type"/>
</dbReference>
<dbReference type="PANTHER" id="PTHR32194">
    <property type="entry name" value="METALLOPROTEASE TLDD"/>
    <property type="match status" value="1"/>
</dbReference>
<dbReference type="PANTHER" id="PTHR32194:SF12">
    <property type="entry name" value="PROTEASOME SUBUNIT BETA"/>
    <property type="match status" value="1"/>
</dbReference>
<dbReference type="Pfam" id="PF00227">
    <property type="entry name" value="Proteasome"/>
    <property type="match status" value="1"/>
</dbReference>
<dbReference type="PRINTS" id="PR00141">
    <property type="entry name" value="PROTEASOME"/>
</dbReference>
<dbReference type="SUPFAM" id="SSF56235">
    <property type="entry name" value="N-terminal nucleophile aminohydrolases (Ntn hydrolases)"/>
    <property type="match status" value="1"/>
</dbReference>
<dbReference type="PROSITE" id="PS00854">
    <property type="entry name" value="PROTEASOME_BETA_1"/>
    <property type="match status" value="1"/>
</dbReference>
<dbReference type="PROSITE" id="PS51476">
    <property type="entry name" value="PROTEASOME_BETA_2"/>
    <property type="match status" value="1"/>
</dbReference>
<name>PSB9_SALSA</name>